<comment type="function">
    <text evidence="1">Multidrug resistance efflux protein.</text>
</comment>
<comment type="subcellular location">
    <subcellularLocation>
        <location evidence="3">Cell membrane</location>
        <topology evidence="3">Multi-pass membrane protein</topology>
    </subcellularLocation>
</comment>
<comment type="similarity">
    <text evidence="3">Belongs to the multi antimicrobial extrusion (MATE) (TC 2.A.66.1) family. MepA subfamily.</text>
</comment>
<gene>
    <name type="primary">mepA</name>
    <name type="ordered locus">SACOL0405</name>
</gene>
<sequence length="451" mass="48776">MKDEQLYYFEKSPVFKAMMHFSLPMMIGTLLSVIYGILNIYFIGFLEDSHMISAISLTLPVFAILMGLGNLFGVGAGTYISRLLGAKDYSKSKFVSSFSIYGGIALGLIVILVTLPFSDQIAAILGARGETLALTSNYLKVMFLSAPFVILFFILEQFARAIGAPMVSMIGMLASVGLNIILDPILIFGFDLNVVGAALGTAISNVAAALFFIIYFMKNSDVVSVNIKLAKPNKEMLSEIFKIGIPAFLMSILMGFTGLVLNLFLAHYGNFAIASYGISFRLVQFPELIIMGLCEGVVPLIAYNFMANKGRMKDVIKAVIMSIGVIFVVCMSAVFTIGHHMVGLFTTDQAIVEMATFILKVTMASLLLNGIGFLFTGMLQATGQGRGATIMAILQGAIIIPVLFIMNALFGLTGVIWSLLIAESLCALAAMLIVYLLRDRLTVDTSELIEG</sequence>
<accession>Q5HIW0</accession>
<keyword id="KW-0046">Antibiotic resistance</keyword>
<keyword id="KW-1003">Cell membrane</keyword>
<keyword id="KW-0472">Membrane</keyword>
<keyword id="KW-0812">Transmembrane</keyword>
<keyword id="KW-1133">Transmembrane helix</keyword>
<keyword id="KW-0813">Transport</keyword>
<dbReference type="EMBL" id="CP000046">
    <property type="protein sequence ID" value="AAW38874.1"/>
    <property type="molecule type" value="Genomic_DNA"/>
</dbReference>
<dbReference type="RefSeq" id="WP_000651060.1">
    <property type="nucleotide sequence ID" value="NZ_JBGOFO010000001.1"/>
</dbReference>
<dbReference type="SMR" id="Q5HIW0"/>
<dbReference type="CARD" id="ARO:3000026">
    <property type="molecule name" value="mepA"/>
    <property type="mechanism identifier" value="ARO:0010000"/>
    <property type="mechanism name" value="antibiotic efflux"/>
</dbReference>
<dbReference type="KEGG" id="sac:SACOL0405"/>
<dbReference type="HOGENOM" id="CLU_012893_0_1_9"/>
<dbReference type="Proteomes" id="UP000000530">
    <property type="component" value="Chromosome"/>
</dbReference>
<dbReference type="GO" id="GO:0005886">
    <property type="term" value="C:plasma membrane"/>
    <property type="evidence" value="ECO:0007669"/>
    <property type="project" value="UniProtKB-SubCell"/>
</dbReference>
<dbReference type="GO" id="GO:0015297">
    <property type="term" value="F:antiporter activity"/>
    <property type="evidence" value="ECO:0007669"/>
    <property type="project" value="InterPro"/>
</dbReference>
<dbReference type="GO" id="GO:0042910">
    <property type="term" value="F:xenobiotic transmembrane transporter activity"/>
    <property type="evidence" value="ECO:0007669"/>
    <property type="project" value="InterPro"/>
</dbReference>
<dbReference type="GO" id="GO:0046677">
    <property type="term" value="P:response to antibiotic"/>
    <property type="evidence" value="ECO:0007669"/>
    <property type="project" value="UniProtKB-KW"/>
</dbReference>
<dbReference type="CDD" id="cd13143">
    <property type="entry name" value="MATE_MepA_like"/>
    <property type="match status" value="1"/>
</dbReference>
<dbReference type="InterPro" id="IPR002528">
    <property type="entry name" value="MATE_fam"/>
</dbReference>
<dbReference type="InterPro" id="IPR045070">
    <property type="entry name" value="MATE_MepA-like"/>
</dbReference>
<dbReference type="InterPro" id="IPR051327">
    <property type="entry name" value="MATE_MepA_subfamily"/>
</dbReference>
<dbReference type="InterPro" id="IPR048279">
    <property type="entry name" value="MdtK-like"/>
</dbReference>
<dbReference type="NCBIfam" id="TIGR00797">
    <property type="entry name" value="matE"/>
    <property type="match status" value="1"/>
</dbReference>
<dbReference type="NCBIfam" id="NF000131">
    <property type="entry name" value="MATE_multi_MepA"/>
    <property type="match status" value="1"/>
</dbReference>
<dbReference type="PANTHER" id="PTHR43823:SF3">
    <property type="entry name" value="MULTIDRUG EXPORT PROTEIN MEPA"/>
    <property type="match status" value="1"/>
</dbReference>
<dbReference type="PANTHER" id="PTHR43823">
    <property type="entry name" value="SPORULATION PROTEIN YKVU"/>
    <property type="match status" value="1"/>
</dbReference>
<dbReference type="Pfam" id="PF01554">
    <property type="entry name" value="MatE"/>
    <property type="match status" value="2"/>
</dbReference>
<dbReference type="PIRSF" id="PIRSF006603">
    <property type="entry name" value="DinF"/>
    <property type="match status" value="1"/>
</dbReference>
<organism>
    <name type="scientific">Staphylococcus aureus (strain COL)</name>
    <dbReference type="NCBI Taxonomy" id="93062"/>
    <lineage>
        <taxon>Bacteria</taxon>
        <taxon>Bacillati</taxon>
        <taxon>Bacillota</taxon>
        <taxon>Bacilli</taxon>
        <taxon>Bacillales</taxon>
        <taxon>Staphylococcaceae</taxon>
        <taxon>Staphylococcus</taxon>
    </lineage>
</organism>
<feature type="chain" id="PRO_0000290228" description="Multidrug export protein MepA">
    <location>
        <begin position="1"/>
        <end position="451"/>
    </location>
</feature>
<feature type="transmembrane region" description="Helical" evidence="2">
    <location>
        <begin position="26"/>
        <end position="46"/>
    </location>
</feature>
<feature type="transmembrane region" description="Helical" evidence="2">
    <location>
        <begin position="54"/>
        <end position="74"/>
    </location>
</feature>
<feature type="transmembrane region" description="Helical" evidence="2">
    <location>
        <begin position="97"/>
        <end position="117"/>
    </location>
</feature>
<feature type="transmembrane region" description="Helical" evidence="2">
    <location>
        <begin position="139"/>
        <end position="159"/>
    </location>
</feature>
<feature type="transmembrane region" description="Helical" evidence="2">
    <location>
        <begin position="170"/>
        <end position="190"/>
    </location>
</feature>
<feature type="transmembrane region" description="Helical" evidence="2">
    <location>
        <begin position="194"/>
        <end position="214"/>
    </location>
</feature>
<feature type="transmembrane region" description="Helical" evidence="2">
    <location>
        <begin position="245"/>
        <end position="265"/>
    </location>
</feature>
<feature type="transmembrane region" description="Helical" evidence="2">
    <location>
        <begin position="282"/>
        <end position="302"/>
    </location>
</feature>
<feature type="transmembrane region" description="Helical" evidence="2">
    <location>
        <begin position="318"/>
        <end position="338"/>
    </location>
</feature>
<feature type="transmembrane region" description="Helical" evidence="2">
    <location>
        <begin position="355"/>
        <end position="375"/>
    </location>
</feature>
<feature type="transmembrane region" description="Helical" evidence="2">
    <location>
        <begin position="397"/>
        <end position="417"/>
    </location>
</feature>
<feature type="transmembrane region" description="Helical" evidence="2">
    <location>
        <begin position="418"/>
        <end position="438"/>
    </location>
</feature>
<evidence type="ECO:0000250" key="1"/>
<evidence type="ECO:0000255" key="2"/>
<evidence type="ECO:0000305" key="3"/>
<reference key="1">
    <citation type="journal article" date="2005" name="J. Bacteriol.">
        <title>Insights on evolution of virulence and resistance from the complete genome analysis of an early methicillin-resistant Staphylococcus aureus strain and a biofilm-producing methicillin-resistant Staphylococcus epidermidis strain.</title>
        <authorList>
            <person name="Gill S.R."/>
            <person name="Fouts D.E."/>
            <person name="Archer G.L."/>
            <person name="Mongodin E.F."/>
            <person name="DeBoy R.T."/>
            <person name="Ravel J."/>
            <person name="Paulsen I.T."/>
            <person name="Kolonay J.F."/>
            <person name="Brinkac L.M."/>
            <person name="Beanan M.J."/>
            <person name="Dodson R.J."/>
            <person name="Daugherty S.C."/>
            <person name="Madupu R."/>
            <person name="Angiuoli S.V."/>
            <person name="Durkin A.S."/>
            <person name="Haft D.H."/>
            <person name="Vamathevan J.J."/>
            <person name="Khouri H."/>
            <person name="Utterback T.R."/>
            <person name="Lee C."/>
            <person name="Dimitrov G."/>
            <person name="Jiang L."/>
            <person name="Qin H."/>
            <person name="Weidman J."/>
            <person name="Tran K."/>
            <person name="Kang K.H."/>
            <person name="Hance I.R."/>
            <person name="Nelson K.E."/>
            <person name="Fraser C.M."/>
        </authorList>
    </citation>
    <scope>NUCLEOTIDE SEQUENCE [LARGE SCALE GENOMIC DNA]</scope>
    <source>
        <strain>COL</strain>
    </source>
</reference>
<name>MEPA_STAAC</name>
<protein>
    <recommendedName>
        <fullName>Multidrug export protein MepA</fullName>
    </recommendedName>
</protein>
<proteinExistence type="inferred from homology"/>